<dbReference type="EMBL" id="AF525936">
    <property type="protein sequence ID" value="AAN60450.1"/>
    <property type="molecule type" value="Genomic_RNA"/>
</dbReference>
<dbReference type="Proteomes" id="UP000887520">
    <property type="component" value="Genome"/>
</dbReference>
<sequence length="317" mass="37261">MNSFAGWMKLIDPILSRAIAIIPHLKEIINIAFKPFNGIDKLDDHDHQHLKNRILNIDEKIYYNERKPIRSFLLDNENRSNIILGYNEKIKQLEVAIVKEVISPILIHLSSQRGALIKMEEIPFLAHFEREMKHSLLLPEKDFFIQPVKKVILANLEQGLSYLLDMHPRKNDSGQTRIEYYHKIYSRGFNQESYGSPMLKNNKALELIGYSTYIWNLIGLREDLFLIQFYETGFKSTYMACFPRACSSFLYKHKNAESLDMIFSTLIIESSFIIRVAQSLSFFDDSLSDYFYPRMPLDNNIIRIKTREKENIDHWGN</sequence>
<proteinExistence type="predicted"/>
<accession>Q8BCV3</accession>
<organismHost>
    <name type="scientific">Lactuca sativa</name>
    <name type="common">Garden lettuce</name>
    <dbReference type="NCBI Taxonomy" id="4236"/>
</organismHost>
<protein>
    <recommendedName>
        <fullName>Uncharacterized 37 kDa protein</fullName>
    </recommendedName>
</protein>
<organism>
    <name type="scientific">Mirafiori lettuce virus (isolate Lettuce/Netherlands/LS301-O)</name>
    <name type="common">MiLV</name>
    <name type="synonym">Mirafiori lettuce big-vein virus</name>
    <dbReference type="NCBI Taxonomy" id="652964"/>
    <lineage>
        <taxon>Viruses</taxon>
        <taxon>Riboviria</taxon>
        <taxon>Orthornavirae</taxon>
        <taxon>Negarnaviricota</taxon>
        <taxon>Haploviricotina</taxon>
        <taxon>Milneviricetes</taxon>
        <taxon>Serpentovirales</taxon>
        <taxon>Aspiviridae</taxon>
        <taxon>Ophiovirus</taxon>
        <taxon>Ophiovirus mirafioriense</taxon>
    </lineage>
</organism>
<reference key="1">
    <citation type="journal article" date="2002" name="J. Gen. Virol.">
        <title>Nucleotide sequence and genomic organization of an ophiovirus associated with lettuce big-vein disease.</title>
        <authorList>
            <person name="Van Der Wilk F."/>
            <person name="Dullemans A.M."/>
            <person name="Verbeek M."/>
            <person name="Van Den Heuvel J.F.J.M."/>
        </authorList>
    </citation>
    <scope>NUCLEOTIDE SEQUENCE [GENOMIC RNA]</scope>
</reference>
<feature type="chain" id="PRO_0000391506" description="Uncharacterized 37 kDa protein">
    <location>
        <begin position="1"/>
        <end position="317"/>
    </location>
</feature>
<name>VG37_MILVL</name>